<accession>O95988</accession>
<accession>A6NEK7</accession>
<accession>Q6IAR7</accession>
<accession>Q9UBQ4</accession>
<evidence type="ECO:0000269" key="1">
    <source>
    </source>
</evidence>
<evidence type="ECO:0000269" key="2">
    <source>
    </source>
</evidence>
<evidence type="ECO:0000269" key="3">
    <source>
    </source>
</evidence>
<evidence type="ECO:0000269" key="4">
    <source>
    </source>
</evidence>
<evidence type="ECO:0000305" key="5"/>
<organism>
    <name type="scientific">Homo sapiens</name>
    <name type="common">Human</name>
    <dbReference type="NCBI Taxonomy" id="9606"/>
    <lineage>
        <taxon>Eukaryota</taxon>
        <taxon>Metazoa</taxon>
        <taxon>Chordata</taxon>
        <taxon>Craniata</taxon>
        <taxon>Vertebrata</taxon>
        <taxon>Euteleostomi</taxon>
        <taxon>Mammalia</taxon>
        <taxon>Eutheria</taxon>
        <taxon>Euarchontoglires</taxon>
        <taxon>Primates</taxon>
        <taxon>Haplorrhini</taxon>
        <taxon>Catarrhini</taxon>
        <taxon>Hominidae</taxon>
        <taxon>Homo</taxon>
    </lineage>
</organism>
<keyword id="KW-0160">Chromosomal rearrangement</keyword>
<keyword id="KW-1267">Proteomics identification</keyword>
<keyword id="KW-0656">Proto-oncogene</keyword>
<keyword id="KW-1185">Reference proteome</keyword>
<gene>
    <name type="primary">TCL1B</name>
    <name type="synonym">TCL1</name>
</gene>
<proteinExistence type="evidence at protein level"/>
<protein>
    <recommendedName>
        <fullName>T-cell leukemia/lymphoma protein 1B</fullName>
    </recommendedName>
    <alternativeName>
        <fullName>Oncogene TCL-1B</fullName>
        <shortName>Oncogene TCL1B</shortName>
    </alternativeName>
    <alternativeName>
        <fullName>SYN-1</fullName>
    </alternativeName>
    <alternativeName>
        <fullName>Syncytiotrophoblast-specific protein</fullName>
    </alternativeName>
    <alternativeName>
        <fullName>TCL1/MTCP1-like protein 1</fullName>
    </alternativeName>
</protein>
<comment type="function">
    <text evidence="3">Enhances the phosphorylation and activation of AKT1 and AKT2.</text>
</comment>
<comment type="subunit">
    <text evidence="3">Interacts with AKT1 and AKT2 (via PH domain). Does not interact with AKT3.</text>
</comment>
<comment type="interaction">
    <interactant intactId="EBI-727338">
        <id>O95988</id>
    </interactant>
    <interactant intactId="EBI-2949658">
        <id>O95429</id>
        <label>BAG4</label>
    </interactant>
    <organismsDiffer>false</organismsDiffer>
    <experiments>3</experiments>
</comment>
<comment type="interaction">
    <interactant intactId="EBI-727338">
        <id>O95988</id>
    </interactant>
    <interactant intactId="EBI-13317131">
        <id>Q5VUJ9-2</id>
        <label>EFCAB2</label>
    </interactant>
    <organismsDiffer>false</organismsDiffer>
    <experiments>3</experiments>
</comment>
<comment type="interaction">
    <interactant intactId="EBI-727338">
        <id>O95988</id>
    </interactant>
    <interactant intactId="EBI-374781">
        <id>O76003</id>
        <label>GLRX3</label>
    </interactant>
    <organismsDiffer>false</organismsDiffer>
    <experiments>5</experiments>
</comment>
<comment type="interaction">
    <interactant intactId="EBI-727338">
        <id>O95988</id>
    </interactant>
    <interactant intactId="EBI-347619">
        <id>O15116</id>
        <label>LSM1</label>
    </interactant>
    <organismsDiffer>false</organismsDiffer>
    <experiments>3</experiments>
</comment>
<comment type="interaction">
    <interactant intactId="EBI-727338">
        <id>O95988</id>
    </interactant>
    <interactant intactId="EBI-373007">
        <id>Q9Y4Y9</id>
        <label>LSM5</label>
    </interactant>
    <organismsDiffer>false</organismsDiffer>
    <experiments>3</experiments>
</comment>
<comment type="interaction">
    <interactant intactId="EBI-727338">
        <id>O95988</id>
    </interactant>
    <interactant intactId="EBI-348372">
        <id>Q9UK45</id>
        <label>LSM7</label>
    </interactant>
    <organismsDiffer>false</organismsDiffer>
    <experiments>3</experiments>
</comment>
<comment type="interaction">
    <interactant intactId="EBI-727338">
        <id>O95988</id>
    </interactant>
    <interactant intactId="EBI-968587">
        <id>Q9P0L2</id>
        <label>MARK1</label>
    </interactant>
    <organismsDiffer>false</organismsDiffer>
    <experiments>5</experiments>
</comment>
<comment type="interaction">
    <interactant intactId="EBI-727338">
        <id>O95988</id>
    </interactant>
    <interactant intactId="EBI-18582591">
        <id>Q99687-3</id>
        <label>MEIS3</label>
    </interactant>
    <organismsDiffer>false</organismsDiffer>
    <experiments>3</experiments>
</comment>
<comment type="interaction">
    <interactant intactId="EBI-727338">
        <id>O95988</id>
    </interactant>
    <interactant intactId="EBI-2340269">
        <id>Q13064</id>
        <label>MKRN3</label>
    </interactant>
    <organismsDiffer>false</organismsDiffer>
    <experiments>6</experiments>
</comment>
<comment type="interaction">
    <interactant intactId="EBI-727338">
        <id>O95988</id>
    </interactant>
    <interactant intactId="EBI-11079894">
        <id>Q9HB20</id>
        <label>PLEKHA3</label>
    </interactant>
    <organismsDiffer>false</organismsDiffer>
    <experiments>3</experiments>
</comment>
<comment type="interaction">
    <interactant intactId="EBI-727338">
        <id>O95988</id>
    </interactant>
    <interactant intactId="EBI-302345">
        <id>Q8ND90</id>
        <label>PNMA1</label>
    </interactant>
    <organismsDiffer>false</organismsDiffer>
    <experiments>3</experiments>
</comment>
<comment type="interaction">
    <interactant intactId="EBI-727338">
        <id>O95988</id>
    </interactant>
    <interactant intactId="EBI-624585">
        <id>P62308</id>
        <label>SNRPG</label>
    </interactant>
    <organismsDiffer>false</organismsDiffer>
    <experiments>3</experiments>
</comment>
<comment type="interaction">
    <interactant intactId="EBI-727338">
        <id>O95988</id>
    </interactant>
    <interactant intactId="EBI-373456">
        <id>Q9Y3S2</id>
        <label>ZNF330</label>
    </interactant>
    <organismsDiffer>false</organismsDiffer>
    <experiments>6</experiments>
</comment>
<comment type="tissue specificity">
    <text evidence="1 2">Expressed in a variety of tissues including placenta and testis.</text>
</comment>
<comment type="miscellaneous">
    <text>Activated in chronic T-cell leukemias (T-CLL) carrying rearrangements of the 14q32.1 region.</text>
</comment>
<comment type="similarity">
    <text evidence="5">Belongs to the TCL1 family.</text>
</comment>
<comment type="online information" name="Atlas of Genetics and Cytogenetics in Oncology and Haematology">
    <link uri="https://atlasgeneticsoncology.org/gene/354/TCL1B"/>
</comment>
<feature type="chain" id="PRO_0000184490" description="T-cell leukemia/lymphoma protein 1B">
    <location>
        <begin position="1"/>
        <end position="128"/>
    </location>
</feature>
<feature type="sequence variant" id="VAR_020467" description="In dbSNP:rs1064017." evidence="2 4">
    <original>G</original>
    <variation>R</variation>
    <location>
        <position position="93"/>
    </location>
</feature>
<sequence>MASEASVRLGVPPGRLWIQRPGIYEDEEGRTWVTVVVRFNPSRREWARASQGSRYEPSITVHLWQMAVHTRELLSSGQMPFSQLPAVWQLYPGRKYRAADSSFWEIADHGQIDSMEQLVLTYQPERKD</sequence>
<name>TCL1B_HUMAN</name>
<dbReference type="EMBL" id="AB018563">
    <property type="protein sequence ID" value="BAA76712.1"/>
    <property type="molecule type" value="mRNA"/>
</dbReference>
<dbReference type="EMBL" id="AB025274">
    <property type="protein sequence ID" value="BAA82476.1"/>
    <property type="molecule type" value="Genomic_DNA"/>
</dbReference>
<dbReference type="EMBL" id="AF110465">
    <property type="protein sequence ID" value="AAD16996.1"/>
    <property type="molecule type" value="Genomic_DNA"/>
</dbReference>
<dbReference type="EMBL" id="AF110466">
    <property type="protein sequence ID" value="AAD16997.1"/>
    <property type="molecule type" value="mRNA"/>
</dbReference>
<dbReference type="EMBL" id="AF137027">
    <property type="protein sequence ID" value="AAD30130.1"/>
    <property type="molecule type" value="mRNA"/>
</dbReference>
<dbReference type="EMBL" id="CR457087">
    <property type="protein sequence ID" value="CAG33368.1"/>
    <property type="molecule type" value="mRNA"/>
</dbReference>
<dbReference type="EMBL" id="AL133467">
    <property type="status" value="NOT_ANNOTATED_CDS"/>
    <property type="molecule type" value="Genomic_DNA"/>
</dbReference>
<dbReference type="EMBL" id="CH471061">
    <property type="protein sequence ID" value="EAW81619.1"/>
    <property type="molecule type" value="Genomic_DNA"/>
</dbReference>
<dbReference type="EMBL" id="BC041616">
    <property type="protein sequence ID" value="AAH41616.1"/>
    <property type="molecule type" value="mRNA"/>
</dbReference>
<dbReference type="EMBL" id="BC051000">
    <property type="protein sequence ID" value="AAH51000.1"/>
    <property type="molecule type" value="mRNA"/>
</dbReference>
<dbReference type="CCDS" id="CCDS32151.1"/>
<dbReference type="RefSeq" id="NP_004909.1">
    <property type="nucleotide sequence ID" value="NM_004918.4"/>
</dbReference>
<dbReference type="SMR" id="O95988"/>
<dbReference type="BioGRID" id="114983">
    <property type="interactions" value="46"/>
</dbReference>
<dbReference type="FunCoup" id="O95988">
    <property type="interactions" value="350"/>
</dbReference>
<dbReference type="IntAct" id="O95988">
    <property type="interactions" value="37"/>
</dbReference>
<dbReference type="STRING" id="9606.ENSP00000343223"/>
<dbReference type="iPTMnet" id="O95988"/>
<dbReference type="PhosphoSitePlus" id="O95988"/>
<dbReference type="BioMuta" id="TCL1B"/>
<dbReference type="MassIVE" id="O95988"/>
<dbReference type="PaxDb" id="9606-ENSP00000343223"/>
<dbReference type="PeptideAtlas" id="O95988"/>
<dbReference type="ProteomicsDB" id="51164"/>
<dbReference type="Antibodypedia" id="27286">
    <property type="antibodies" value="66 antibodies from 21 providers"/>
</dbReference>
<dbReference type="DNASU" id="9623"/>
<dbReference type="Ensembl" id="ENST00000340722.8">
    <property type="protein sequence ID" value="ENSP00000343223.6"/>
    <property type="gene ID" value="ENSG00000213231.13"/>
</dbReference>
<dbReference type="GeneID" id="9623"/>
<dbReference type="KEGG" id="hsa:9623"/>
<dbReference type="MANE-Select" id="ENST00000340722.8">
    <property type="protein sequence ID" value="ENSP00000343223.6"/>
    <property type="RefSeq nucleotide sequence ID" value="NM_004918.4"/>
    <property type="RefSeq protein sequence ID" value="NP_004909.1"/>
</dbReference>
<dbReference type="UCSC" id="uc001yez.3">
    <property type="organism name" value="human"/>
</dbReference>
<dbReference type="AGR" id="HGNC:11649"/>
<dbReference type="CTD" id="9623"/>
<dbReference type="DisGeNET" id="9623"/>
<dbReference type="GeneCards" id="TCL1B"/>
<dbReference type="HGNC" id="HGNC:11649">
    <property type="gene designation" value="TCL1B"/>
</dbReference>
<dbReference type="HPA" id="ENSG00000213231">
    <property type="expression patterns" value="Tissue enhanced (bone marrow, lymphoid tissue, testis)"/>
</dbReference>
<dbReference type="MIM" id="603769">
    <property type="type" value="gene"/>
</dbReference>
<dbReference type="neXtProt" id="NX_O95988"/>
<dbReference type="OpenTargets" id="ENSG00000213231"/>
<dbReference type="PharmGKB" id="PA36401"/>
<dbReference type="VEuPathDB" id="HostDB:ENSG00000213231"/>
<dbReference type="eggNOG" id="ENOG502TEDJ">
    <property type="taxonomic scope" value="Eukaryota"/>
</dbReference>
<dbReference type="GeneTree" id="ENSGT00390000006885"/>
<dbReference type="HOGENOM" id="CLU_168379_0_1_1"/>
<dbReference type="InParanoid" id="O95988"/>
<dbReference type="OMA" id="MWQMPVH"/>
<dbReference type="OrthoDB" id="9834674at2759"/>
<dbReference type="PAN-GO" id="O95988">
    <property type="GO annotations" value="2 GO annotations based on evolutionary models"/>
</dbReference>
<dbReference type="PhylomeDB" id="O95988"/>
<dbReference type="TreeFam" id="TF340217"/>
<dbReference type="PathwayCommons" id="O95988"/>
<dbReference type="SignaLink" id="O95988"/>
<dbReference type="SIGNOR" id="O95988"/>
<dbReference type="BioGRID-ORCS" id="9623">
    <property type="hits" value="19 hits in 1141 CRISPR screens"/>
</dbReference>
<dbReference type="ChiTaRS" id="TCL1B">
    <property type="organism name" value="human"/>
</dbReference>
<dbReference type="GeneWiki" id="TCL1B"/>
<dbReference type="GenomeRNAi" id="9623"/>
<dbReference type="Pharos" id="O95988">
    <property type="development level" value="Tbio"/>
</dbReference>
<dbReference type="PRO" id="PR:O95988"/>
<dbReference type="Proteomes" id="UP000005640">
    <property type="component" value="Chromosome 14"/>
</dbReference>
<dbReference type="RNAct" id="O95988">
    <property type="molecule type" value="protein"/>
</dbReference>
<dbReference type="Bgee" id="ENSG00000213231">
    <property type="expression patterns" value="Expressed in primordial germ cell in gonad and 36 other cell types or tissues"/>
</dbReference>
<dbReference type="ExpressionAtlas" id="O95988">
    <property type="expression patterns" value="baseline and differential"/>
</dbReference>
<dbReference type="GO" id="GO:0019901">
    <property type="term" value="F:protein kinase binding"/>
    <property type="evidence" value="ECO:0000353"/>
    <property type="project" value="UniProtKB"/>
</dbReference>
<dbReference type="GO" id="GO:0043539">
    <property type="term" value="F:protein serine/threonine kinase activator activity"/>
    <property type="evidence" value="ECO:0000314"/>
    <property type="project" value="UniProtKB"/>
</dbReference>
<dbReference type="GO" id="GO:0035556">
    <property type="term" value="P:intracellular signal transduction"/>
    <property type="evidence" value="ECO:0000314"/>
    <property type="project" value="UniProtKB"/>
</dbReference>
<dbReference type="FunFam" id="2.40.15.10:FF:000003">
    <property type="entry name" value="T cell leukemia/lymphoma 1B"/>
    <property type="match status" value="1"/>
</dbReference>
<dbReference type="Gene3D" id="2.40.15.10">
    <property type="entry name" value="TCL1/MTCP1"/>
    <property type="match status" value="1"/>
</dbReference>
<dbReference type="InterPro" id="IPR004832">
    <property type="entry name" value="TCL1_MTCP1"/>
</dbReference>
<dbReference type="InterPro" id="IPR036672">
    <property type="entry name" value="TCL1_MTCP1_sf"/>
</dbReference>
<dbReference type="PANTHER" id="PTHR14060">
    <property type="entry name" value="PROTEIN P13 MTCP-1"/>
    <property type="match status" value="1"/>
</dbReference>
<dbReference type="PANTHER" id="PTHR14060:SF2">
    <property type="entry name" value="T-CELL LEUKEMIA_LYMPHOMA PROTEIN 1B"/>
    <property type="match status" value="1"/>
</dbReference>
<dbReference type="Pfam" id="PF01840">
    <property type="entry name" value="TCL1_MTCP1"/>
    <property type="match status" value="1"/>
</dbReference>
<dbReference type="SUPFAM" id="SSF50904">
    <property type="entry name" value="Oncogene products"/>
    <property type="match status" value="1"/>
</dbReference>
<reference key="1">
    <citation type="journal article" date="1999" name="Cancer Res.">
        <title>Identification of the TCL1/MTCP1-like 1 (TML1) gene from the region next to the TCL1 locus.</title>
        <authorList>
            <person name="Sugimoto J."/>
            <person name="Hatakeyama T."/>
            <person name="Narducci M.G."/>
            <person name="Russo G."/>
            <person name="Isobe M."/>
        </authorList>
    </citation>
    <scope>NUCLEOTIDE SEQUENCE [GENOMIC DNA / MRNA]</scope>
    <scope>TISSUE SPECIFICITY</scope>
    <scope>VARIANT ARG-93</scope>
    <source>
        <tissue>Placenta</tissue>
    </source>
</reference>
<reference key="2">
    <citation type="journal article" date="1999" name="Proc. Natl. Acad. Sci. U.S.A.">
        <title>Abnormalities at 14q32.1 in T cell malignancies involve two oncogenes.</title>
        <authorList>
            <person name="Pekarsky Y."/>
            <person name="Hallas C."/>
            <person name="Isobe M."/>
            <person name="Russo G."/>
            <person name="Croce C.M."/>
        </authorList>
    </citation>
    <scope>NUCLEOTIDE SEQUENCE [GENOMIC DNA / MRNA]</scope>
    <scope>TISSUE SPECIFICITY</scope>
</reference>
<reference key="3">
    <citation type="submission" date="1999-03" db="EMBL/GenBank/DDBJ databases">
        <title>A syncytiotrophoblast-specific gene Syn-1 cloned from human syncytiotrophoblast subtracted cDNA library.</title>
        <authorList>
            <person name="Jiang B."/>
            <person name="Mendelson C.R."/>
        </authorList>
    </citation>
    <scope>NUCLEOTIDE SEQUENCE [MRNA]</scope>
</reference>
<reference key="4">
    <citation type="submission" date="2004-06" db="EMBL/GenBank/DDBJ databases">
        <title>Cloning of human full open reading frames in Gateway(TM) system entry vector (pDONR201).</title>
        <authorList>
            <person name="Ebert L."/>
            <person name="Schick M."/>
            <person name="Neubert P."/>
            <person name="Schatten R."/>
            <person name="Henze S."/>
            <person name="Korn B."/>
        </authorList>
    </citation>
    <scope>NUCLEOTIDE SEQUENCE [LARGE SCALE MRNA]</scope>
</reference>
<reference key="5">
    <citation type="journal article" date="2003" name="Nature">
        <title>The DNA sequence and analysis of human chromosome 14.</title>
        <authorList>
            <person name="Heilig R."/>
            <person name="Eckenberg R."/>
            <person name="Petit J.-L."/>
            <person name="Fonknechten N."/>
            <person name="Da Silva C."/>
            <person name="Cattolico L."/>
            <person name="Levy M."/>
            <person name="Barbe V."/>
            <person name="De Berardinis V."/>
            <person name="Ureta-Vidal A."/>
            <person name="Pelletier E."/>
            <person name="Vico V."/>
            <person name="Anthouard V."/>
            <person name="Rowen L."/>
            <person name="Madan A."/>
            <person name="Qin S."/>
            <person name="Sun H."/>
            <person name="Du H."/>
            <person name="Pepin K."/>
            <person name="Artiguenave F."/>
            <person name="Robert C."/>
            <person name="Cruaud C."/>
            <person name="Bruels T."/>
            <person name="Jaillon O."/>
            <person name="Friedlander L."/>
            <person name="Samson G."/>
            <person name="Brottier P."/>
            <person name="Cure S."/>
            <person name="Segurens B."/>
            <person name="Aniere F."/>
            <person name="Samain S."/>
            <person name="Crespeau H."/>
            <person name="Abbasi N."/>
            <person name="Aiach N."/>
            <person name="Boscus D."/>
            <person name="Dickhoff R."/>
            <person name="Dors M."/>
            <person name="Dubois I."/>
            <person name="Friedman C."/>
            <person name="Gouyvenoux M."/>
            <person name="James R."/>
            <person name="Madan A."/>
            <person name="Mairey-Estrada B."/>
            <person name="Mangenot S."/>
            <person name="Martins N."/>
            <person name="Menard M."/>
            <person name="Oztas S."/>
            <person name="Ratcliffe A."/>
            <person name="Shaffer T."/>
            <person name="Trask B."/>
            <person name="Vacherie B."/>
            <person name="Bellemere C."/>
            <person name="Belser C."/>
            <person name="Besnard-Gonnet M."/>
            <person name="Bartol-Mavel D."/>
            <person name="Boutard M."/>
            <person name="Briez-Silla S."/>
            <person name="Combette S."/>
            <person name="Dufosse-Laurent V."/>
            <person name="Ferron C."/>
            <person name="Lechaplais C."/>
            <person name="Louesse C."/>
            <person name="Muselet D."/>
            <person name="Magdelenat G."/>
            <person name="Pateau E."/>
            <person name="Petit E."/>
            <person name="Sirvain-Trukniewicz P."/>
            <person name="Trybou A."/>
            <person name="Vega-Czarny N."/>
            <person name="Bataille E."/>
            <person name="Bluet E."/>
            <person name="Bordelais I."/>
            <person name="Dubois M."/>
            <person name="Dumont C."/>
            <person name="Guerin T."/>
            <person name="Haffray S."/>
            <person name="Hammadi R."/>
            <person name="Muanga J."/>
            <person name="Pellouin V."/>
            <person name="Robert D."/>
            <person name="Wunderle E."/>
            <person name="Gauguet G."/>
            <person name="Roy A."/>
            <person name="Sainte-Marthe L."/>
            <person name="Verdier J."/>
            <person name="Verdier-Discala C."/>
            <person name="Hillier L.W."/>
            <person name="Fulton L."/>
            <person name="McPherson J."/>
            <person name="Matsuda F."/>
            <person name="Wilson R."/>
            <person name="Scarpelli C."/>
            <person name="Gyapay G."/>
            <person name="Wincker P."/>
            <person name="Saurin W."/>
            <person name="Quetier F."/>
            <person name="Waterston R."/>
            <person name="Hood L."/>
            <person name="Weissenbach J."/>
        </authorList>
    </citation>
    <scope>NUCLEOTIDE SEQUENCE [LARGE SCALE GENOMIC DNA]</scope>
</reference>
<reference key="6">
    <citation type="submission" date="2005-07" db="EMBL/GenBank/DDBJ databases">
        <authorList>
            <person name="Mural R.J."/>
            <person name="Istrail S."/>
            <person name="Sutton G.G."/>
            <person name="Florea L."/>
            <person name="Halpern A.L."/>
            <person name="Mobarry C.M."/>
            <person name="Lippert R."/>
            <person name="Walenz B."/>
            <person name="Shatkay H."/>
            <person name="Dew I."/>
            <person name="Miller J.R."/>
            <person name="Flanigan M.J."/>
            <person name="Edwards N.J."/>
            <person name="Bolanos R."/>
            <person name="Fasulo D."/>
            <person name="Halldorsson B.V."/>
            <person name="Hannenhalli S."/>
            <person name="Turner R."/>
            <person name="Yooseph S."/>
            <person name="Lu F."/>
            <person name="Nusskern D.R."/>
            <person name="Shue B.C."/>
            <person name="Zheng X.H."/>
            <person name="Zhong F."/>
            <person name="Delcher A.L."/>
            <person name="Huson D.H."/>
            <person name="Kravitz S.A."/>
            <person name="Mouchard L."/>
            <person name="Reinert K."/>
            <person name="Remington K.A."/>
            <person name="Clark A.G."/>
            <person name="Waterman M.S."/>
            <person name="Eichler E.E."/>
            <person name="Adams M.D."/>
            <person name="Hunkapiller M.W."/>
            <person name="Myers E.W."/>
            <person name="Venter J.C."/>
        </authorList>
    </citation>
    <scope>NUCLEOTIDE SEQUENCE [LARGE SCALE GENOMIC DNA]</scope>
</reference>
<reference key="7">
    <citation type="journal article" date="2004" name="Genome Res.">
        <title>The status, quality, and expansion of the NIH full-length cDNA project: the Mammalian Gene Collection (MGC).</title>
        <authorList>
            <consortium name="The MGC Project Team"/>
        </authorList>
    </citation>
    <scope>NUCLEOTIDE SEQUENCE [LARGE SCALE MRNA]</scope>
    <scope>VARIANT ARG-93</scope>
    <source>
        <tissue>Lymphoma</tissue>
    </source>
</reference>
<reference key="8">
    <citation type="journal article" date="2000" name="Mol. Cell">
        <title>The protooncogene TCL1 is an Akt kinase coactivator.</title>
        <authorList>
            <person name="Laine J."/>
            <person name="Kuenstle G."/>
            <person name="Obata T."/>
            <person name="Sha M."/>
            <person name="Noguchi M."/>
        </authorList>
    </citation>
    <scope>FUNCTION</scope>
    <scope>INTERACTION WITH AKT1 AND AKT2</scope>
</reference>
<reference key="9">
    <citation type="journal article" date="2002" name="J. Biol. Chem.">
        <title>Differential regulation of Akt kinase isoforms by the members of the TCL1 oncogene family.</title>
        <authorList>
            <person name="Laine J."/>
            <person name="Kuenstle G."/>
            <person name="Obata T."/>
            <person name="Noguchi M."/>
        </authorList>
    </citation>
    <scope>LACK OF INTERACTION WITH AKT3</scope>
</reference>